<evidence type="ECO:0000250" key="1">
    <source>
        <dbReference type="UniProtKB" id="Q6ZQ93"/>
    </source>
</evidence>
<evidence type="ECO:0000255" key="2">
    <source>
        <dbReference type="PROSITE-ProRule" id="PRU10092"/>
    </source>
</evidence>
<evidence type="ECO:0000255" key="3">
    <source>
        <dbReference type="PROSITE-ProRule" id="PRU10093"/>
    </source>
</evidence>
<evidence type="ECO:0000256" key="4">
    <source>
        <dbReference type="SAM" id="MobiDB-lite"/>
    </source>
</evidence>
<evidence type="ECO:0000269" key="5">
    <source>
    </source>
</evidence>
<evidence type="ECO:0000269" key="6">
    <source>
    </source>
</evidence>
<evidence type="ECO:0000269" key="7">
    <source>
    </source>
</evidence>
<evidence type="ECO:0000303" key="8">
    <source>
    </source>
</evidence>
<evidence type="ECO:0000303" key="9">
    <source>
    </source>
</evidence>
<evidence type="ECO:0000303" key="10">
    <source>
    </source>
</evidence>
<evidence type="ECO:0000303" key="11">
    <source>
    </source>
</evidence>
<evidence type="ECO:0000305" key="12"/>
<evidence type="ECO:0007744" key="13">
    <source>
    </source>
</evidence>
<evidence type="ECO:0007744" key="14">
    <source>
    </source>
</evidence>
<evidence type="ECO:0007744" key="15">
    <source>
    </source>
</evidence>
<evidence type="ECO:0007744" key="16">
    <source>
    </source>
</evidence>
<evidence type="ECO:0007744" key="17">
    <source>
    </source>
</evidence>
<evidence type="ECO:0007829" key="18">
    <source>
        <dbReference type="PDB" id="7W3R"/>
    </source>
</evidence>
<name>UBP34_HUMAN</name>
<proteinExistence type="evidence at protein level"/>
<sequence length="3546" mass="404233">MCENCADLVEVLNEISDVEGGDGLQLRKEHTLKIFTYINSWTQRQCLCCFKEYKHLEIFNQVVCALINLVIAQVQVLRDQLCKHCTTINIDSTWQDESNQAEEPLNIDRECNEGSTERQKSIEKKSNSTRICNLTEEESSKSSDPFSLWSTDEKEKLLLCVAKIFQIQFPLYTAYKHNTHPTIEDISTQESNILGAFCDMNDVEVPLHLLRYVCLFCGKNGLSLMKDCFEYGTPETLPFLIAHAFITVVSNIRIWLHIPAVMQHIIPFRTYVIRYLCKLSDQELRQSAARNMADLMWSTVKEPLDTTLCFDKESLDLAFKYFMSPTLTMRLAGLSQITNQLHTFNDVCNNESLVSDTETSIAKELADWLISNNVVEHIFGPNLHIEIIKQCQVILNFLAAEGRLSTQHIDCIWAAAQLKHCSRYIHDLFPSLIKNLDPVPLRHLLNLVSALEPSVHTEQTLYLASMLIKALWNNALAAKAQLSKQSSFASLLNTNIPIGNKKEEEELRRTAPSPWSPAASPQSSDNSDTHQSGGSDIEMDEQLINRTKHVQQRLSDTEESMQGSSDETANSGEDGSSGPGSSSGHSDGSSNEVNSSHASQSAGSPGSEVQSEDIADIEALKEEDEDDDHGHNPPKSSCGTDLRNRKLESQAGICLGDSQGMSERNGTSSGTGKDLVFNTESLPSVDNRMRMLDACSHSEDPEHDISGEMNATHIAQGSQESCITRTGDFLGETIGNELFNCRQFIGPQHHHHHHHHHHHHDGHMVDDMLSADDVSCSSSQVSAKSEKNMADFDGEESGCEEELVQINSHAELTSHLQQHLPNLASIYHEHLSQGPVVHKHQFNSNAVTDINLDNVCKKGNTLLWDIVQDEDAVNLSEGLINEAEKLLCSLVCWFTDRQIRMRFIEGCLENLGNNRSVVISLRLLPKLFGTFQQFGSSYDTHWITMWAEKELNMMKLFFDNLVYYIQTVREGRQKHALYSHSAEVQVRLQFLTCVFSTLGSPDHFRLSLEQVDILWHCLVEDSECYDDALHWFLNQVRSKDQHAMGMETYKHLFLEKMPQLKPETISMTGLNLFQHLCNLARLATSAYDGCSNSELCGMDQFWGIALRAQSGDVSRAAIQYINSYYINGKTGLEKEQEFISKCMESLMIASSSLEQESHSSLMVIERGLLMLKTHLEAFRRRFAYHLRQWQIEGTGISSHLKALSDKQSLPLRVVCQPAGLPDKMTIEMYPSDQVADLRAEVTHWYENLQKEQINQQAQLQEFGQSNRKGEFPGGLMGPVRMISSGHELTTDYDEKALHELGFKDMQMVFVSLGAPRRERKGEGVQLPASCLPPPQKDNIPMLLLLQEPHLTTLFDLLEMLASFKPPSGKVAVDDSESLRCEELHLHAENLSRRVWELLMLLPTCPNMLMAFQNISDEQSNDGFNWKELLKIKSAHKLLYALEIIEALGKPNRRIRRESTGSYSDLYPDSDDSSEDQVENSKNSWSCKFVAAGGLQQLLEIFNSGILEPKEQESWTVWQLDCLACLLKLICQFAVDPSDLDLAYHDVFAWSGIAESHRKRTWPGKSRKAAGDHAKGLHIPRLTEVFLVLVQGTSLIQRLMSVAYTYDNLAPRVLKAQSDHRSRHEVSHYSMWLLVSWAHCCSLVKSSLADSDHLQDWLKKLTLLIPETAVRHESCSGLYKLSLSGLDGGDSINRSFLLLAASTLLKFLPDAQALKPIRIDDYEEEPILKPGCKEYFWLLCKLVDNIHIKDASQTTLLDLDALARHLADCIRSREILDHQDGNVEDDGLTGLLRLATSVVKHKPPFKFSREGQEFLRDIFNLLFLLPSLKDRQQPKCKSHSSRAAAYDLLVEMVKGSVENYRLIHNWVMAQHMQSHAPYKWDYWPHEDVRAECRFVGLTNLGATCYLASTIQQLYMIPEARQAVFTAKYSEDMKHKTTLLELQKMFTYLMESECKAYNPRPFCKTYTMDKQPLNTGEQKDMTEFFTDLITKIEEMSPELKNTVKSLFGGVITNNVVSLDCEHVSQTAEEFYTVRCQVADMKNIYESLDEVTIKDTLEGDNMYTCSHCGKKVRAEKRACFKKLPRILSFNTMRYTFNMVTMMKEKVNTHFSFPLRLDMTPYTEDFLMGKSERKEGFKEVSDHSKDSESYEYDLIGVTVHTGTADGGHYYSFIRDIVNPHAYKNNKWYLFNDAEVKPFDSAQLASECFGGEMTTKTYDSVTDKFMDFSFEKTHSAYMLFYKRMEPEEENGREYKFDVSSELLEWIWHDNMQFLQDKNIFEHTYFGFMWQLCSCIPSTLPDPKAVSLMTAKLSTSFVLETFIHSKEKPTMLQWIELLTKQFNNSQAACEWFLDRMADDDWWPMQILIKCPNQIVRQMFQRLCIHVIQRLRPVHAHLYLQPGMEDGSDDMDTSVEDIGGRSCVTRFVRTLLLIMEHGVKPHSKHLTEYFAFLYEFAKMGEEESQFLLSLQAISTMVHFYMGTKGPENPQVEVLSEEEGEEEEEEEDILSLAEEKYRPAALEKMIALVALLVEQSRSERHLTLSQTDMAALTGGKGFPFLFQHIRDGINIRQTCNLIFSLCRYNNRLAEHIVSMLFTSIAKLTPEAANPFFKLLTMLMEFAGGPPGMPPFASYILQRIWEVIEYNPSQCLDWLAVQTPRNKLAHSWVLQNMENWVERFLLAHNYPRVRTSAAYLLVSLIPSNSFRQMFRSTRSLHIPTRDLPLSPDTTVVLHQVYNVLLGLLSRAKLYVDAAVHGTTKLVPYFSFMTYCLISKTEKLMFSTYFMDLWNLFQPKLSEPAIATNHNKQALLSFWYNVCADCPENIRLIVQNPVVTKNIAFNYILADHDDQDVVLFNRGMLPAYYGILRLCCEQSPAFTRQLASHQNIQWAFKNLTPHASQYPGAVEELFNLMQLFIAQRPDMREEELEDIKQFKKTTISCYLRCLDGRSCWTTLISAFRILLESDEDRLLVVFNRGLILMTESFNTLHMMYHEATACHVTGDLVELLSIFLSVLKSTRPYLQRKDVKQALIQWQERIEFAHKLLTLLNSYSPPELRNACIDVLKELVLLSPHDFLHTLVPFLQHNHCTYHHSNIPMSLGPYFPCRENIKLIGGKSNIRPPRPELNMCLLPTMVETSKGKDDVYDRMLLDYFFSYHQFIHLLCRVAINCEKFTETLVKLSVLVAYEGLPLHLALFPKLWTELCQTQSAMSKNCIKLLCEDPVFAEYIKCILMDERTFLNNNIVYTFMTHFLLKVQSQVFSEANCANLISTLITNLISQYQNLQSDFSNRVEISKASASLNGDLRALALLLSVHTPKQLNPALIPTLQELLSKCRTCLQQRNSLQEQEAKERKTKDDEGATPIKRRRVSSDEEHTVDSCISDMKTETREVLTPTSTSDNETRDSSIIDPGTEQDLPSPENSSVKEYRMEVPSSFSEDMSNIRSQHAEEQSNNGRYDDCKEFKDLHCSKDSTLAEEESEFPSTSISAVLSDLADLRSCDGQALPSQDPEVALSLSCGHSRGLFSHMQQHDILDTLCRTIESTIHVVTRISGKGNQAAS</sequence>
<keyword id="KW-0002">3D-structure</keyword>
<keyword id="KW-0025">Alternative splicing</keyword>
<keyword id="KW-0378">Hydrolase</keyword>
<keyword id="KW-0597">Phosphoprotein</keyword>
<keyword id="KW-0645">Protease</keyword>
<keyword id="KW-1267">Proteomics identification</keyword>
<keyword id="KW-1185">Reference proteome</keyword>
<keyword id="KW-0788">Thiol protease</keyword>
<keyword id="KW-0833">Ubl conjugation pathway</keyword>
<keyword id="KW-0879">Wnt signaling pathway</keyword>
<protein>
    <recommendedName>
        <fullName>Ubiquitin carboxyl-terminal hydrolase 34</fullName>
        <ecNumber evidence="5 6">3.4.19.12</ecNumber>
    </recommendedName>
    <alternativeName>
        <fullName>Deubiquitinating enzyme 34</fullName>
    </alternativeName>
    <alternativeName>
        <fullName>Ubiquitin thioesterase 34</fullName>
    </alternativeName>
    <alternativeName>
        <fullName>Ubiquitin-specific-processing protease 34</fullName>
    </alternativeName>
</protein>
<gene>
    <name type="primary">USP34</name>
    <name type="synonym">KIAA0570</name>
    <name type="synonym">KIAA0729</name>
</gene>
<reference key="1">
    <citation type="journal article" date="2004" name="Biochem. Biophys. Res. Commun.">
        <title>Cloning and enzymatic analysis of 22 novel human ubiquitin-specific proteases.</title>
        <authorList>
            <person name="Quesada V."/>
            <person name="Diaz-Perales A."/>
            <person name="Gutierrez-Fernandez A."/>
            <person name="Garabaya C."/>
            <person name="Cal S."/>
            <person name="Lopez-Otin C."/>
        </authorList>
    </citation>
    <scope>NUCLEOTIDE SEQUENCE [MRNA] (ISOFORM 2)</scope>
    <scope>TISSUE SPECIFICITY</scope>
    <scope>ENZYME ACTIVITY</scope>
    <scope>VARIANT THR-661</scope>
</reference>
<reference key="2">
    <citation type="journal article" date="1998" name="DNA Res.">
        <title>Prediction of the coding sequences of unidentified human genes. IX. The complete sequences of 100 new cDNA clones from brain which can code for large proteins in vitro.</title>
        <authorList>
            <person name="Nagase T."/>
            <person name="Ishikawa K."/>
            <person name="Miyajima N."/>
            <person name="Tanaka A."/>
            <person name="Kotani H."/>
            <person name="Nomura N."/>
            <person name="Ohara O."/>
        </authorList>
    </citation>
    <scope>NUCLEOTIDE SEQUENCE [LARGE SCALE MRNA] (ISOFORM 2)</scope>
    <scope>VARIANT THR-661</scope>
    <source>
        <tissue>Brain</tissue>
    </source>
</reference>
<reference key="3">
    <citation type="journal article" date="2002" name="DNA Res.">
        <title>Construction of expression-ready cDNA clones for KIAA genes: manual curation of 330 KIAA cDNA clones.</title>
        <authorList>
            <person name="Nakajima D."/>
            <person name="Okazaki N."/>
            <person name="Yamakawa H."/>
            <person name="Kikuno R."/>
            <person name="Ohara O."/>
            <person name="Nagase T."/>
        </authorList>
    </citation>
    <scope>SEQUENCE REVISION</scope>
</reference>
<reference key="4">
    <citation type="journal article" date="2005" name="Nature">
        <title>Generation and annotation of the DNA sequences of human chromosomes 2 and 4.</title>
        <authorList>
            <person name="Hillier L.W."/>
            <person name="Graves T.A."/>
            <person name="Fulton R.S."/>
            <person name="Fulton L.A."/>
            <person name="Pepin K.H."/>
            <person name="Minx P."/>
            <person name="Wagner-McPherson C."/>
            <person name="Layman D."/>
            <person name="Wylie K."/>
            <person name="Sekhon M."/>
            <person name="Becker M.C."/>
            <person name="Fewell G.A."/>
            <person name="Delehaunty K.D."/>
            <person name="Miner T.L."/>
            <person name="Nash W.E."/>
            <person name="Kremitzki C."/>
            <person name="Oddy L."/>
            <person name="Du H."/>
            <person name="Sun H."/>
            <person name="Bradshaw-Cordum H."/>
            <person name="Ali J."/>
            <person name="Carter J."/>
            <person name="Cordes M."/>
            <person name="Harris A."/>
            <person name="Isak A."/>
            <person name="van Brunt A."/>
            <person name="Nguyen C."/>
            <person name="Du F."/>
            <person name="Courtney L."/>
            <person name="Kalicki J."/>
            <person name="Ozersky P."/>
            <person name="Abbott S."/>
            <person name="Armstrong J."/>
            <person name="Belter E.A."/>
            <person name="Caruso L."/>
            <person name="Cedroni M."/>
            <person name="Cotton M."/>
            <person name="Davidson T."/>
            <person name="Desai A."/>
            <person name="Elliott G."/>
            <person name="Erb T."/>
            <person name="Fronick C."/>
            <person name="Gaige T."/>
            <person name="Haakenson W."/>
            <person name="Haglund K."/>
            <person name="Holmes A."/>
            <person name="Harkins R."/>
            <person name="Kim K."/>
            <person name="Kruchowski S.S."/>
            <person name="Strong C.M."/>
            <person name="Grewal N."/>
            <person name="Goyea E."/>
            <person name="Hou S."/>
            <person name="Levy A."/>
            <person name="Martinka S."/>
            <person name="Mead K."/>
            <person name="McLellan M.D."/>
            <person name="Meyer R."/>
            <person name="Randall-Maher J."/>
            <person name="Tomlinson C."/>
            <person name="Dauphin-Kohlberg S."/>
            <person name="Kozlowicz-Reilly A."/>
            <person name="Shah N."/>
            <person name="Swearengen-Shahid S."/>
            <person name="Snider J."/>
            <person name="Strong J.T."/>
            <person name="Thompson J."/>
            <person name="Yoakum M."/>
            <person name="Leonard S."/>
            <person name="Pearman C."/>
            <person name="Trani L."/>
            <person name="Radionenko M."/>
            <person name="Waligorski J.E."/>
            <person name="Wang C."/>
            <person name="Rock S.M."/>
            <person name="Tin-Wollam A.-M."/>
            <person name="Maupin R."/>
            <person name="Latreille P."/>
            <person name="Wendl M.C."/>
            <person name="Yang S.-P."/>
            <person name="Pohl C."/>
            <person name="Wallis J.W."/>
            <person name="Spieth J."/>
            <person name="Bieri T.A."/>
            <person name="Berkowicz N."/>
            <person name="Nelson J.O."/>
            <person name="Osborne J."/>
            <person name="Ding L."/>
            <person name="Meyer R."/>
            <person name="Sabo A."/>
            <person name="Shotland Y."/>
            <person name="Sinha P."/>
            <person name="Wohldmann P.E."/>
            <person name="Cook L.L."/>
            <person name="Hickenbotham M.T."/>
            <person name="Eldred J."/>
            <person name="Williams D."/>
            <person name="Jones T.A."/>
            <person name="She X."/>
            <person name="Ciccarelli F.D."/>
            <person name="Izaurralde E."/>
            <person name="Taylor J."/>
            <person name="Schmutz J."/>
            <person name="Myers R.M."/>
            <person name="Cox D.R."/>
            <person name="Huang X."/>
            <person name="McPherson J.D."/>
            <person name="Mardis E.R."/>
            <person name="Clifton S.W."/>
            <person name="Warren W.C."/>
            <person name="Chinwalla A.T."/>
            <person name="Eddy S.R."/>
            <person name="Marra M.A."/>
            <person name="Ovcharenko I."/>
            <person name="Furey T.S."/>
            <person name="Miller W."/>
            <person name="Eichler E.E."/>
            <person name="Bork P."/>
            <person name="Suyama M."/>
            <person name="Torrents D."/>
            <person name="Waterston R.H."/>
            <person name="Wilson R.K."/>
        </authorList>
    </citation>
    <scope>NUCLEOTIDE SEQUENCE [LARGE SCALE GENOMIC DNA]</scope>
</reference>
<reference key="5">
    <citation type="journal article" date="2007" name="BMC Genomics">
        <title>The full-ORF clone resource of the German cDNA consortium.</title>
        <authorList>
            <person name="Bechtel S."/>
            <person name="Rosenfelder H."/>
            <person name="Duda A."/>
            <person name="Schmidt C.P."/>
            <person name="Ernst U."/>
            <person name="Wellenreuther R."/>
            <person name="Mehrle A."/>
            <person name="Schuster C."/>
            <person name="Bahr A."/>
            <person name="Bloecker H."/>
            <person name="Heubner D."/>
            <person name="Hoerlein A."/>
            <person name="Michel G."/>
            <person name="Wedler H."/>
            <person name="Koehrer K."/>
            <person name="Ottenwaelder B."/>
            <person name="Poustka A."/>
            <person name="Wiemann S."/>
            <person name="Schupp I."/>
        </authorList>
    </citation>
    <scope>NUCLEOTIDE SEQUENCE [LARGE SCALE MRNA] OF 1723-2532 AND 2629-3546 (ISOFORM 1)</scope>
    <source>
        <tissue>Amygdala</tissue>
        <tissue>Uterus</tissue>
    </source>
</reference>
<reference key="6">
    <citation type="journal article" date="2004" name="Nat. Genet.">
        <title>Complete sequencing and characterization of 21,243 full-length human cDNAs.</title>
        <authorList>
            <person name="Ota T."/>
            <person name="Suzuki Y."/>
            <person name="Nishikawa T."/>
            <person name="Otsuki T."/>
            <person name="Sugiyama T."/>
            <person name="Irie R."/>
            <person name="Wakamatsu A."/>
            <person name="Hayashi K."/>
            <person name="Sato H."/>
            <person name="Nagai K."/>
            <person name="Kimura K."/>
            <person name="Makita H."/>
            <person name="Sekine M."/>
            <person name="Obayashi M."/>
            <person name="Nishi T."/>
            <person name="Shibahara T."/>
            <person name="Tanaka T."/>
            <person name="Ishii S."/>
            <person name="Yamamoto J."/>
            <person name="Saito K."/>
            <person name="Kawai Y."/>
            <person name="Isono Y."/>
            <person name="Nakamura Y."/>
            <person name="Nagahari K."/>
            <person name="Murakami K."/>
            <person name="Yasuda T."/>
            <person name="Iwayanagi T."/>
            <person name="Wagatsuma M."/>
            <person name="Shiratori A."/>
            <person name="Sudo H."/>
            <person name="Hosoiri T."/>
            <person name="Kaku Y."/>
            <person name="Kodaira H."/>
            <person name="Kondo H."/>
            <person name="Sugawara M."/>
            <person name="Takahashi M."/>
            <person name="Kanda K."/>
            <person name="Yokoi T."/>
            <person name="Furuya T."/>
            <person name="Kikkawa E."/>
            <person name="Omura Y."/>
            <person name="Abe K."/>
            <person name="Kamihara K."/>
            <person name="Katsuta N."/>
            <person name="Sato K."/>
            <person name="Tanikawa M."/>
            <person name="Yamazaki M."/>
            <person name="Ninomiya K."/>
            <person name="Ishibashi T."/>
            <person name="Yamashita H."/>
            <person name="Murakawa K."/>
            <person name="Fujimori K."/>
            <person name="Tanai H."/>
            <person name="Kimata M."/>
            <person name="Watanabe M."/>
            <person name="Hiraoka S."/>
            <person name="Chiba Y."/>
            <person name="Ishida S."/>
            <person name="Ono Y."/>
            <person name="Takiguchi S."/>
            <person name="Watanabe S."/>
            <person name="Yosida M."/>
            <person name="Hotuta T."/>
            <person name="Kusano J."/>
            <person name="Kanehori K."/>
            <person name="Takahashi-Fujii A."/>
            <person name="Hara H."/>
            <person name="Tanase T.-O."/>
            <person name="Nomura Y."/>
            <person name="Togiya S."/>
            <person name="Komai F."/>
            <person name="Hara R."/>
            <person name="Takeuchi K."/>
            <person name="Arita M."/>
            <person name="Imose N."/>
            <person name="Musashino K."/>
            <person name="Yuuki H."/>
            <person name="Oshima A."/>
            <person name="Sasaki N."/>
            <person name="Aotsuka S."/>
            <person name="Yoshikawa Y."/>
            <person name="Matsunawa H."/>
            <person name="Ichihara T."/>
            <person name="Shiohata N."/>
            <person name="Sano S."/>
            <person name="Moriya S."/>
            <person name="Momiyama H."/>
            <person name="Satoh N."/>
            <person name="Takami S."/>
            <person name="Terashima Y."/>
            <person name="Suzuki O."/>
            <person name="Nakagawa S."/>
            <person name="Senoh A."/>
            <person name="Mizoguchi H."/>
            <person name="Goto Y."/>
            <person name="Shimizu F."/>
            <person name="Wakebe H."/>
            <person name="Hishigaki H."/>
            <person name="Watanabe T."/>
            <person name="Sugiyama A."/>
            <person name="Takemoto M."/>
            <person name="Kawakami B."/>
            <person name="Yamazaki M."/>
            <person name="Watanabe K."/>
            <person name="Kumagai A."/>
            <person name="Itakura S."/>
            <person name="Fukuzumi Y."/>
            <person name="Fujimori Y."/>
            <person name="Komiyama M."/>
            <person name="Tashiro H."/>
            <person name="Tanigami A."/>
            <person name="Fujiwara T."/>
            <person name="Ono T."/>
            <person name="Yamada K."/>
            <person name="Fujii Y."/>
            <person name="Ozaki K."/>
            <person name="Hirao M."/>
            <person name="Ohmori Y."/>
            <person name="Kawabata A."/>
            <person name="Hikiji T."/>
            <person name="Kobatake N."/>
            <person name="Inagaki H."/>
            <person name="Ikema Y."/>
            <person name="Okamoto S."/>
            <person name="Okitani R."/>
            <person name="Kawakami T."/>
            <person name="Noguchi S."/>
            <person name="Itoh T."/>
            <person name="Shigeta K."/>
            <person name="Senba T."/>
            <person name="Matsumura K."/>
            <person name="Nakajima Y."/>
            <person name="Mizuno T."/>
            <person name="Morinaga M."/>
            <person name="Sasaki M."/>
            <person name="Togashi T."/>
            <person name="Oyama M."/>
            <person name="Hata H."/>
            <person name="Watanabe M."/>
            <person name="Komatsu T."/>
            <person name="Mizushima-Sugano J."/>
            <person name="Satoh T."/>
            <person name="Shirai Y."/>
            <person name="Takahashi Y."/>
            <person name="Nakagawa K."/>
            <person name="Okumura K."/>
            <person name="Nagase T."/>
            <person name="Nomura N."/>
            <person name="Kikuchi H."/>
            <person name="Masuho Y."/>
            <person name="Yamashita R."/>
            <person name="Nakai K."/>
            <person name="Yada T."/>
            <person name="Nakamura Y."/>
            <person name="Ohara O."/>
            <person name="Isogai T."/>
            <person name="Sugano S."/>
        </authorList>
    </citation>
    <scope>NUCLEOTIDE SEQUENCE [LARGE SCALE MRNA] OF 1821-3338</scope>
    <source>
        <tissue>Testis</tissue>
    </source>
</reference>
<reference key="7">
    <citation type="journal article" date="1998" name="DNA Res.">
        <title>Prediction of the coding sequences of unidentified human genes. XI. The complete sequences of 100 new cDNA clones from brain which code for large proteins in vitro.</title>
        <authorList>
            <person name="Nagase T."/>
            <person name="Ishikawa K."/>
            <person name="Suyama M."/>
            <person name="Kikuno R."/>
            <person name="Miyajima N."/>
            <person name="Tanaka A."/>
            <person name="Kotani H."/>
            <person name="Nomura N."/>
            <person name="Ohara O."/>
        </authorList>
    </citation>
    <scope>NUCLEOTIDE SEQUENCE [LARGE SCALE MRNA] OF 2351-3546 (ISOFORM 2)</scope>
    <source>
        <tissue>Brain</tissue>
    </source>
</reference>
<reference key="8">
    <citation type="journal article" date="2004" name="Genome Res.">
        <title>The status, quality, and expansion of the NIH full-length cDNA project: the Mammalian Gene Collection (MGC).</title>
        <authorList>
            <consortium name="The MGC Project Team"/>
        </authorList>
    </citation>
    <scope>NUCLEOTIDE SEQUENCE [LARGE SCALE MRNA] OF 2561-3546 (ISOFORM 2)</scope>
    <scope>NUCLEOTIDE SEQUENCE [LARGE SCALE MRNA] OF 3024-3546 (ISOFORM 3)</scope>
    <source>
        <tissue>Brain</tissue>
        <tissue>Colon</tissue>
        <tissue>Kidney</tissue>
    </source>
</reference>
<reference key="9">
    <citation type="journal article" date="2007" name="Science">
        <title>ATM and ATR substrate analysis reveals extensive protein networks responsive to DNA damage.</title>
        <authorList>
            <person name="Matsuoka S."/>
            <person name="Ballif B.A."/>
            <person name="Smogorzewska A."/>
            <person name="McDonald E.R. III"/>
            <person name="Hurov K.E."/>
            <person name="Luo J."/>
            <person name="Bakalarski C.E."/>
            <person name="Zhao Z."/>
            <person name="Solimini N."/>
            <person name="Lerenthal Y."/>
            <person name="Shiloh Y."/>
            <person name="Gygi S.P."/>
            <person name="Elledge S.J."/>
        </authorList>
    </citation>
    <scope>PHOSPHORYLATION [LARGE SCALE ANALYSIS] AT SER-649</scope>
    <scope>VARIANT [LARGE SCALE ANALYSIS] THR-661</scope>
    <scope>IDENTIFICATION BY MASS SPECTROMETRY [LARGE SCALE ANALYSIS]</scope>
    <source>
        <tissue>Embryonic kidney</tissue>
    </source>
</reference>
<reference key="10">
    <citation type="journal article" date="2008" name="Proc. Natl. Acad. Sci. U.S.A.">
        <title>A quantitative atlas of mitotic phosphorylation.</title>
        <authorList>
            <person name="Dephoure N."/>
            <person name="Zhou C."/>
            <person name="Villen J."/>
            <person name="Beausoleil S.A."/>
            <person name="Bakalarski C.E."/>
            <person name="Elledge S.J."/>
            <person name="Gygi S.P."/>
        </authorList>
    </citation>
    <scope>PHOSPHORYLATION [LARGE SCALE ANALYSIS] AT SER-352; SER-3358; SER-3359 AND SER-3406</scope>
    <scope>IDENTIFICATION BY MASS SPECTROMETRY [LARGE SCALE ANALYSIS]</scope>
    <source>
        <tissue>Cervix carcinoma</tissue>
    </source>
</reference>
<reference key="11">
    <citation type="journal article" date="2009" name="Sci. Signal.">
        <title>Quantitative phosphoproteomic analysis of T cell receptor signaling reveals system-wide modulation of protein-protein interactions.</title>
        <authorList>
            <person name="Mayya V."/>
            <person name="Lundgren D.H."/>
            <person name="Hwang S.-I."/>
            <person name="Rezaul K."/>
            <person name="Wu L."/>
            <person name="Eng J.K."/>
            <person name="Rodionov V."/>
            <person name="Han D.K."/>
        </authorList>
    </citation>
    <scope>PHOSPHORYLATION [LARGE SCALE ANALYSIS] AT SER-2488</scope>
    <scope>IDENTIFICATION BY MASS SPECTROMETRY [LARGE SCALE ANALYSIS]</scope>
    <source>
        <tissue>Leukemic T-cell</tissue>
    </source>
</reference>
<reference key="12">
    <citation type="journal article" date="2011" name="BMC Syst. Biol.">
        <title>Initial characterization of the human central proteome.</title>
        <authorList>
            <person name="Burkard T.R."/>
            <person name="Planyavsky M."/>
            <person name="Kaupe I."/>
            <person name="Breitwieser F.P."/>
            <person name="Buerckstuemmer T."/>
            <person name="Bennett K.L."/>
            <person name="Superti-Furga G."/>
            <person name="Colinge J."/>
        </authorList>
    </citation>
    <scope>IDENTIFICATION BY MASS SPECTROMETRY [LARGE SCALE ANALYSIS]</scope>
</reference>
<reference key="13">
    <citation type="journal article" date="2011" name="Mol. Cell. Biol.">
        <title>The Ubiquitin specific protease USP34 regulates Axin stability and Wnt/beta-catenin signaling.</title>
        <authorList>
            <person name="Lui T.T."/>
            <person name="Lacroix C."/>
            <person name="Ahmed S.M."/>
            <person name="Goldenberg S.J."/>
            <person name="Leach C.A."/>
            <person name="Daulat A.M."/>
            <person name="Angers S."/>
        </authorList>
    </citation>
    <scope>FUNCTION</scope>
    <scope>CATALYTIC ACTIVITY</scope>
    <scope>INTERACTION WITH AXIN1 AND AXIN2</scope>
    <scope>MUTAGENESIS OF CYS-1903</scope>
</reference>
<reference key="14">
    <citation type="journal article" date="2013" name="J. Proteome Res.">
        <title>Toward a comprehensive characterization of a human cancer cell phosphoproteome.</title>
        <authorList>
            <person name="Zhou H."/>
            <person name="Di Palma S."/>
            <person name="Preisinger C."/>
            <person name="Peng M."/>
            <person name="Polat A.N."/>
            <person name="Heck A.J."/>
            <person name="Mohammed S."/>
        </authorList>
    </citation>
    <scope>PHOSPHORYLATION [LARGE SCALE ANALYSIS] AT SER-487; SER-3358; SER-3359; THR-3381 AND SER-3386</scope>
    <scope>IDENTIFICATION BY MASS SPECTROMETRY [LARGE SCALE ANALYSIS]</scope>
    <source>
        <tissue>Cervix carcinoma</tissue>
        <tissue>Erythroleukemia</tissue>
    </source>
</reference>
<reference key="15">
    <citation type="journal article" date="2014" name="J. Proteomics">
        <title>An enzyme assisted RP-RPLC approach for in-depth analysis of human liver phosphoproteome.</title>
        <authorList>
            <person name="Bian Y."/>
            <person name="Song C."/>
            <person name="Cheng K."/>
            <person name="Dong M."/>
            <person name="Wang F."/>
            <person name="Huang J."/>
            <person name="Sun D."/>
            <person name="Wang L."/>
            <person name="Ye M."/>
            <person name="Zou H."/>
        </authorList>
    </citation>
    <scope>PHOSPHORYLATION [LARGE SCALE ANALYSIS] AT SER-3503</scope>
    <scope>IDENTIFICATION BY MASS SPECTROMETRY [LARGE SCALE ANALYSIS]</scope>
    <source>
        <tissue>Liver</tissue>
    </source>
</reference>
<dbReference type="EC" id="3.4.19.12" evidence="5 6"/>
<dbReference type="EMBL" id="AJ586138">
    <property type="protein sequence ID" value="CAE51938.1"/>
    <property type="molecule type" value="mRNA"/>
</dbReference>
<dbReference type="EMBL" id="AB011142">
    <property type="protein sequence ID" value="BAA25496.2"/>
    <property type="status" value="ALT_INIT"/>
    <property type="molecule type" value="mRNA"/>
</dbReference>
<dbReference type="EMBL" id="AC016747">
    <property type="status" value="NOT_ANNOTATED_CDS"/>
    <property type="molecule type" value="Genomic_DNA"/>
</dbReference>
<dbReference type="EMBL" id="AL050092">
    <property type="protein sequence ID" value="CAB43264.1"/>
    <property type="molecule type" value="mRNA"/>
</dbReference>
<dbReference type="EMBL" id="AL831918">
    <property type="protein sequence ID" value="CAD38579.1"/>
    <property type="molecule type" value="mRNA"/>
</dbReference>
<dbReference type="EMBL" id="AK125898">
    <property type="protein sequence ID" value="BAG54261.1"/>
    <property type="status" value="ALT_INIT"/>
    <property type="molecule type" value="mRNA"/>
</dbReference>
<dbReference type="EMBL" id="AB018272">
    <property type="protein sequence ID" value="BAA34449.1"/>
    <property type="molecule type" value="mRNA"/>
</dbReference>
<dbReference type="EMBL" id="BC022783">
    <property type="protein sequence ID" value="AAH22783.1"/>
    <property type="molecule type" value="mRNA"/>
</dbReference>
<dbReference type="EMBL" id="BC062325">
    <property type="protein sequence ID" value="AAH62325.1"/>
    <property type="molecule type" value="mRNA"/>
</dbReference>
<dbReference type="EMBL" id="BC107761">
    <property type="protein sequence ID" value="AAI07762.1"/>
    <property type="status" value="ALT_FRAME"/>
    <property type="molecule type" value="mRNA"/>
</dbReference>
<dbReference type="CCDS" id="CCDS42686.1">
    <molecule id="Q70CQ2-1"/>
</dbReference>
<dbReference type="PIR" id="T00338">
    <property type="entry name" value="T00338"/>
</dbReference>
<dbReference type="PIR" id="T13057">
    <property type="entry name" value="T13057"/>
</dbReference>
<dbReference type="RefSeq" id="NP_055524.3">
    <molecule id="Q70CQ2-1"/>
    <property type="nucleotide sequence ID" value="NM_014709.3"/>
</dbReference>
<dbReference type="PDB" id="7W3R">
    <property type="method" value="X-ray"/>
    <property type="resolution" value="1.92 A"/>
    <property type="chains" value="A/B=1889-2272"/>
</dbReference>
<dbReference type="PDB" id="7W3U">
    <property type="method" value="X-ray"/>
    <property type="resolution" value="3.13 A"/>
    <property type="chains" value="A/B/C=1889-2272"/>
</dbReference>
<dbReference type="PDBsum" id="7W3R"/>
<dbReference type="PDBsum" id="7W3U"/>
<dbReference type="SMR" id="Q70CQ2"/>
<dbReference type="BioGRID" id="115085">
    <property type="interactions" value="195"/>
</dbReference>
<dbReference type="FunCoup" id="Q70CQ2">
    <property type="interactions" value="4751"/>
</dbReference>
<dbReference type="IntAct" id="Q70CQ2">
    <property type="interactions" value="83"/>
</dbReference>
<dbReference type="MINT" id="Q70CQ2"/>
<dbReference type="STRING" id="9606.ENSP00000381577"/>
<dbReference type="MEROPS" id="C19.067"/>
<dbReference type="GlyGen" id="Q70CQ2">
    <property type="glycosylation" value="2 sites, 1 O-linked glycan (2 sites)"/>
</dbReference>
<dbReference type="iPTMnet" id="Q70CQ2"/>
<dbReference type="PhosphoSitePlus" id="Q70CQ2"/>
<dbReference type="SwissPalm" id="Q70CQ2"/>
<dbReference type="BioMuta" id="USP34"/>
<dbReference type="DMDM" id="212276488"/>
<dbReference type="jPOST" id="Q70CQ2"/>
<dbReference type="MassIVE" id="Q70CQ2"/>
<dbReference type="PaxDb" id="9606-ENSP00000381577"/>
<dbReference type="PeptideAtlas" id="Q70CQ2"/>
<dbReference type="ProteomicsDB" id="68521">
    <molecule id="Q70CQ2-1"/>
</dbReference>
<dbReference type="ProteomicsDB" id="68522">
    <molecule id="Q70CQ2-2"/>
</dbReference>
<dbReference type="ProteomicsDB" id="68523">
    <molecule id="Q70CQ2-3"/>
</dbReference>
<dbReference type="Pumba" id="Q70CQ2"/>
<dbReference type="Antibodypedia" id="7689">
    <property type="antibodies" value="101 antibodies from 23 providers"/>
</dbReference>
<dbReference type="DNASU" id="9736"/>
<dbReference type="Ensembl" id="ENST00000398571.7">
    <molecule id="Q70CQ2-1"/>
    <property type="protein sequence ID" value="ENSP00000381577.2"/>
    <property type="gene ID" value="ENSG00000115464.15"/>
</dbReference>
<dbReference type="GeneID" id="9736"/>
<dbReference type="KEGG" id="hsa:9736"/>
<dbReference type="MANE-Select" id="ENST00000398571.7">
    <property type="protein sequence ID" value="ENSP00000381577.2"/>
    <property type="RefSeq nucleotide sequence ID" value="NM_014709.4"/>
    <property type="RefSeq protein sequence ID" value="NP_055524.3"/>
</dbReference>
<dbReference type="UCSC" id="uc002sbe.4">
    <molecule id="Q70CQ2-1"/>
    <property type="organism name" value="human"/>
</dbReference>
<dbReference type="AGR" id="HGNC:20066"/>
<dbReference type="CTD" id="9736"/>
<dbReference type="DisGeNET" id="9736"/>
<dbReference type="GeneCards" id="USP34"/>
<dbReference type="HGNC" id="HGNC:20066">
    <property type="gene designation" value="USP34"/>
</dbReference>
<dbReference type="HPA" id="ENSG00000115464">
    <property type="expression patterns" value="Low tissue specificity"/>
</dbReference>
<dbReference type="MalaCards" id="USP34"/>
<dbReference type="MIM" id="615295">
    <property type="type" value="gene"/>
</dbReference>
<dbReference type="neXtProt" id="NX_Q70CQ2"/>
<dbReference type="OpenTargets" id="ENSG00000115464"/>
<dbReference type="PharmGKB" id="PA134897042"/>
<dbReference type="VEuPathDB" id="HostDB:ENSG00000115464"/>
<dbReference type="eggNOG" id="KOG1866">
    <property type="taxonomic scope" value="Eukaryota"/>
</dbReference>
<dbReference type="GeneTree" id="ENSGT00940000158659"/>
<dbReference type="HOGENOM" id="CLU_000109_0_0_1"/>
<dbReference type="InParanoid" id="Q70CQ2"/>
<dbReference type="OMA" id="KLMYSLY"/>
<dbReference type="OrthoDB" id="289038at2759"/>
<dbReference type="PAN-GO" id="Q70CQ2">
    <property type="GO annotations" value="5 GO annotations based on evolutionary models"/>
</dbReference>
<dbReference type="PhylomeDB" id="Q70CQ2"/>
<dbReference type="TreeFam" id="TF323966"/>
<dbReference type="PathwayCommons" id="Q70CQ2"/>
<dbReference type="Reactome" id="R-HSA-201681">
    <property type="pathway name" value="TCF dependent signaling in response to WNT"/>
</dbReference>
<dbReference type="Reactome" id="R-HSA-5689880">
    <property type="pathway name" value="Ub-specific processing proteases"/>
</dbReference>
<dbReference type="SignaLink" id="Q70CQ2"/>
<dbReference type="BioGRID-ORCS" id="9736">
    <property type="hits" value="37 hits in 1204 CRISPR screens"/>
</dbReference>
<dbReference type="ChiTaRS" id="USP34">
    <property type="organism name" value="human"/>
</dbReference>
<dbReference type="GeneWiki" id="USP34"/>
<dbReference type="GenomeRNAi" id="9736"/>
<dbReference type="Pharos" id="Q70CQ2">
    <property type="development level" value="Tbio"/>
</dbReference>
<dbReference type="PRO" id="PR:Q70CQ2"/>
<dbReference type="Proteomes" id="UP000005640">
    <property type="component" value="Chromosome 2"/>
</dbReference>
<dbReference type="RNAct" id="Q70CQ2">
    <property type="molecule type" value="protein"/>
</dbReference>
<dbReference type="Bgee" id="ENSG00000115464">
    <property type="expression patterns" value="Expressed in nipple and 206 other cell types or tissues"/>
</dbReference>
<dbReference type="ExpressionAtlas" id="Q70CQ2">
    <property type="expression patterns" value="baseline and differential"/>
</dbReference>
<dbReference type="GO" id="GO:0005829">
    <property type="term" value="C:cytosol"/>
    <property type="evidence" value="ECO:0000318"/>
    <property type="project" value="GO_Central"/>
</dbReference>
<dbReference type="GO" id="GO:0005634">
    <property type="term" value="C:nucleus"/>
    <property type="evidence" value="ECO:0000318"/>
    <property type="project" value="GO_Central"/>
</dbReference>
<dbReference type="GO" id="GO:0004843">
    <property type="term" value="F:cysteine-type deubiquitinase activity"/>
    <property type="evidence" value="ECO:0000314"/>
    <property type="project" value="UniProtKB"/>
</dbReference>
<dbReference type="GO" id="GO:0004197">
    <property type="term" value="F:cysteine-type endopeptidase activity"/>
    <property type="evidence" value="ECO:0000315"/>
    <property type="project" value="UniProtKB"/>
</dbReference>
<dbReference type="GO" id="GO:0090263">
    <property type="term" value="P:positive regulation of canonical Wnt signaling pathway"/>
    <property type="evidence" value="ECO:0000314"/>
    <property type="project" value="UniProtKB"/>
</dbReference>
<dbReference type="GO" id="GO:0016579">
    <property type="term" value="P:protein deubiquitination"/>
    <property type="evidence" value="ECO:0000304"/>
    <property type="project" value="Reactome"/>
</dbReference>
<dbReference type="GO" id="GO:0071108">
    <property type="term" value="P:protein K48-linked deubiquitination"/>
    <property type="evidence" value="ECO:0000314"/>
    <property type="project" value="UniProtKB"/>
</dbReference>
<dbReference type="GO" id="GO:0006508">
    <property type="term" value="P:proteolysis"/>
    <property type="evidence" value="ECO:0007669"/>
    <property type="project" value="UniProtKB-KW"/>
</dbReference>
<dbReference type="GO" id="GO:0031647">
    <property type="term" value="P:regulation of protein stability"/>
    <property type="evidence" value="ECO:0000318"/>
    <property type="project" value="GO_Central"/>
</dbReference>
<dbReference type="GO" id="GO:0016055">
    <property type="term" value="P:Wnt signaling pathway"/>
    <property type="evidence" value="ECO:0000304"/>
    <property type="project" value="Reactome"/>
</dbReference>
<dbReference type="CDD" id="cd02659">
    <property type="entry name" value="peptidase_C19C"/>
    <property type="match status" value="1"/>
</dbReference>
<dbReference type="FunFam" id="3.90.70.10:FF:000014">
    <property type="entry name" value="Ubiquitin carboxyl-terminal hydrolase 34"/>
    <property type="match status" value="1"/>
</dbReference>
<dbReference type="Gene3D" id="3.90.70.10">
    <property type="entry name" value="Cysteine proteinases"/>
    <property type="match status" value="1"/>
</dbReference>
<dbReference type="InterPro" id="IPR016024">
    <property type="entry name" value="ARM-type_fold"/>
</dbReference>
<dbReference type="InterPro" id="IPR056850">
    <property type="entry name" value="ARM_UBP34_24_USP9X_Y"/>
</dbReference>
<dbReference type="InterPro" id="IPR021905">
    <property type="entry name" value="DUF3517"/>
</dbReference>
<dbReference type="InterPro" id="IPR038765">
    <property type="entry name" value="Papain-like_cys_pep_sf"/>
</dbReference>
<dbReference type="InterPro" id="IPR050164">
    <property type="entry name" value="Peptidase_C19"/>
</dbReference>
<dbReference type="InterPro" id="IPR001394">
    <property type="entry name" value="Peptidase_C19_UCH"/>
</dbReference>
<dbReference type="InterPro" id="IPR018200">
    <property type="entry name" value="USP_CS"/>
</dbReference>
<dbReference type="InterPro" id="IPR028889">
    <property type="entry name" value="USP_dom"/>
</dbReference>
<dbReference type="PANTHER" id="PTHR24006">
    <property type="entry name" value="UBIQUITIN CARBOXYL-TERMINAL HYDROLASE"/>
    <property type="match status" value="1"/>
</dbReference>
<dbReference type="PANTHER" id="PTHR24006:SF827">
    <property type="entry name" value="UBIQUITIN CARBOXYL-TERMINAL HYDROLASE 34"/>
    <property type="match status" value="1"/>
</dbReference>
<dbReference type="Pfam" id="PF25010">
    <property type="entry name" value="ARM_UBP24_USP9X-Y"/>
    <property type="match status" value="2"/>
</dbReference>
<dbReference type="Pfam" id="PF12030">
    <property type="entry name" value="DUF3517"/>
    <property type="match status" value="1"/>
</dbReference>
<dbReference type="Pfam" id="PF00443">
    <property type="entry name" value="UCH"/>
    <property type="match status" value="1"/>
</dbReference>
<dbReference type="SUPFAM" id="SSF48371">
    <property type="entry name" value="ARM repeat"/>
    <property type="match status" value="1"/>
</dbReference>
<dbReference type="SUPFAM" id="SSF54001">
    <property type="entry name" value="Cysteine proteinases"/>
    <property type="match status" value="1"/>
</dbReference>
<dbReference type="PROSITE" id="PS00972">
    <property type="entry name" value="USP_1"/>
    <property type="match status" value="1"/>
</dbReference>
<dbReference type="PROSITE" id="PS00973">
    <property type="entry name" value="USP_2"/>
    <property type="match status" value="1"/>
</dbReference>
<dbReference type="PROSITE" id="PS50235">
    <property type="entry name" value="USP_3"/>
    <property type="match status" value="1"/>
</dbReference>
<accession>Q70CQ2</accession>
<accession>A8MWD0</accession>
<accession>B3KWU9</accession>
<accession>O60316</accession>
<accession>O94834</accession>
<accession>Q3B777</accession>
<accession>Q6P6C9</accession>
<accession>Q7L8P6</accession>
<accession>Q8N3T9</accession>
<accession>Q8TBW2</accession>
<accession>Q9UGA1</accession>
<feature type="chain" id="PRO_0000249519" description="Ubiquitin carboxyl-terminal hydrolase 34">
    <location>
        <begin position="1"/>
        <end position="3546"/>
    </location>
</feature>
<feature type="domain" description="USP">
    <location>
        <begin position="1894"/>
        <end position="2239"/>
    </location>
</feature>
<feature type="region of interest" description="Disordered" evidence="4">
    <location>
        <begin position="502"/>
        <end position="535"/>
    </location>
</feature>
<feature type="region of interest" description="Disordered" evidence="4">
    <location>
        <begin position="550"/>
        <end position="679"/>
    </location>
</feature>
<feature type="region of interest" description="Disordered" evidence="4">
    <location>
        <begin position="1459"/>
        <end position="1478"/>
    </location>
</feature>
<feature type="region of interest" description="Disordered" evidence="4">
    <location>
        <begin position="3331"/>
        <end position="3443"/>
    </location>
</feature>
<feature type="compositionally biased region" description="Low complexity" evidence="4">
    <location>
        <begin position="511"/>
        <end position="524"/>
    </location>
</feature>
<feature type="compositionally biased region" description="Polar residues" evidence="4">
    <location>
        <begin position="525"/>
        <end position="534"/>
    </location>
</feature>
<feature type="compositionally biased region" description="Polar residues" evidence="4">
    <location>
        <begin position="560"/>
        <end position="570"/>
    </location>
</feature>
<feature type="compositionally biased region" description="Low complexity" evidence="4">
    <location>
        <begin position="571"/>
        <end position="590"/>
    </location>
</feature>
<feature type="compositionally biased region" description="Polar residues" evidence="4">
    <location>
        <begin position="591"/>
        <end position="609"/>
    </location>
</feature>
<feature type="compositionally biased region" description="Acidic residues" evidence="4">
    <location>
        <begin position="610"/>
        <end position="627"/>
    </location>
</feature>
<feature type="compositionally biased region" description="Polar residues" evidence="4">
    <location>
        <begin position="659"/>
        <end position="671"/>
    </location>
</feature>
<feature type="compositionally biased region" description="Acidic residues" evidence="4">
    <location>
        <begin position="1467"/>
        <end position="1477"/>
    </location>
</feature>
<feature type="compositionally biased region" description="Basic and acidic residues" evidence="4">
    <location>
        <begin position="3336"/>
        <end position="3347"/>
    </location>
</feature>
<feature type="compositionally biased region" description="Polar residues" evidence="4">
    <location>
        <begin position="3421"/>
        <end position="3432"/>
    </location>
</feature>
<feature type="compositionally biased region" description="Basic and acidic residues" evidence="4">
    <location>
        <begin position="3433"/>
        <end position="3443"/>
    </location>
</feature>
<feature type="active site" description="Nucleophile" evidence="12">
    <location>
        <position position="1903"/>
    </location>
</feature>
<feature type="active site" description="Proton acceptor" evidence="2 3">
    <location>
        <position position="2164"/>
    </location>
</feature>
<feature type="modified residue" description="Phosphoserine" evidence="14">
    <location>
        <position position="352"/>
    </location>
</feature>
<feature type="modified residue" description="Phosphoserine" evidence="1">
    <location>
        <position position="486"/>
    </location>
</feature>
<feature type="modified residue" description="Phosphoserine" evidence="16">
    <location>
        <position position="487"/>
    </location>
</feature>
<feature type="modified residue" description="Phosphoserine" evidence="1">
    <location>
        <position position="490"/>
    </location>
</feature>
<feature type="modified residue" description="Phosphoserine" evidence="13">
    <location>
        <position position="649"/>
    </location>
</feature>
<feature type="modified residue" description="Phosphoserine" evidence="1">
    <location>
        <position position="1469"/>
    </location>
</feature>
<feature type="modified residue" description="Phosphoserine" evidence="15">
    <location>
        <position position="2488"/>
    </location>
</feature>
<feature type="modified residue" description="Phosphoserine" evidence="14 16">
    <location>
        <position position="3358"/>
    </location>
</feature>
<feature type="modified residue" description="Phosphoserine" evidence="14 16">
    <location>
        <position position="3359"/>
    </location>
</feature>
<feature type="modified residue" description="Phosphothreonine" evidence="16">
    <location>
        <position position="3381"/>
    </location>
</feature>
<feature type="modified residue" description="Phosphoserine" evidence="16">
    <location>
        <position position="3386"/>
    </location>
</feature>
<feature type="modified residue" description="Phosphoserine" evidence="14">
    <location>
        <position position="3406"/>
    </location>
</feature>
<feature type="modified residue" description="Phosphoserine" evidence="17">
    <location>
        <position position="3503"/>
    </location>
</feature>
<feature type="splice variant" id="VSP_035639" description="In isoform 2 and isoform 3." evidence="8 9 10 11">
    <location>
        <begin position="1"/>
        <end position="139"/>
    </location>
</feature>
<feature type="splice variant" id="VSP_035640" description="In isoform 2 and isoform 3." evidence="8 9 10 11">
    <original>SKSSDPFSLWSTDEKEKLLLCVA</original>
    <variation>MRRKNSYYVWQ</variation>
    <location>
        <begin position="140"/>
        <end position="162"/>
    </location>
</feature>
<feature type="splice variant" id="VSP_020463" description="In isoform 3." evidence="9">
    <location>
        <begin position="2936"/>
        <end position="3018"/>
    </location>
</feature>
<feature type="sequence variant" id="VAR_047106" description="In dbSNP:rs6722430." evidence="5 7 13">
    <original>M</original>
    <variation>T</variation>
    <location>
        <position position="661"/>
    </location>
</feature>
<feature type="sequence variant" id="VAR_047107" description="In dbSNP:rs6723818.">
    <original>L</original>
    <variation>R</variation>
    <location>
        <position position="1663"/>
    </location>
</feature>
<feature type="sequence variant" id="VAR_047108" description="In dbSNP:rs4386306.">
    <original>D</original>
    <variation>N</variation>
    <location>
        <position position="2348"/>
    </location>
</feature>
<feature type="mutagenesis site" description="Loss of function." evidence="6">
    <original>C</original>
    <variation>S</variation>
    <location>
        <position position="1903"/>
    </location>
</feature>
<feature type="helix" evidence="18">
    <location>
        <begin position="1903"/>
        <end position="1913"/>
    </location>
</feature>
<feature type="helix" evidence="18">
    <location>
        <begin position="1916"/>
        <end position="1923"/>
    </location>
</feature>
<feature type="helix" evidence="18">
    <location>
        <begin position="1934"/>
        <end position="1949"/>
    </location>
</feature>
<feature type="strand" evidence="18">
    <location>
        <begin position="1951"/>
        <end position="1955"/>
    </location>
</feature>
<feature type="helix" evidence="18">
    <location>
        <begin position="1958"/>
        <end position="1963"/>
    </location>
</feature>
<feature type="strand" evidence="18">
    <location>
        <begin position="1966"/>
        <end position="1970"/>
    </location>
</feature>
<feature type="helix" evidence="18">
    <location>
        <begin position="1979"/>
        <end position="1993"/>
    </location>
</feature>
<feature type="helix" evidence="18">
    <location>
        <begin position="1995"/>
        <end position="2004"/>
    </location>
</feature>
<feature type="strand" evidence="18">
    <location>
        <begin position="2007"/>
        <end position="2019"/>
    </location>
</feature>
<feature type="strand" evidence="18">
    <location>
        <begin position="2021"/>
        <end position="2034"/>
    </location>
</feature>
<feature type="helix" evidence="18">
    <location>
        <begin position="2041"/>
        <end position="2048"/>
    </location>
</feature>
<feature type="strand" evidence="18">
    <location>
        <begin position="2052"/>
        <end position="2054"/>
    </location>
</feature>
<feature type="helix" evidence="18">
    <location>
        <begin position="2056"/>
        <end position="2058"/>
    </location>
</feature>
<feature type="turn" evidence="18">
    <location>
        <begin position="2063"/>
        <end position="2065"/>
    </location>
</feature>
<feature type="strand" evidence="18">
    <location>
        <begin position="2071"/>
        <end position="2079"/>
    </location>
</feature>
<feature type="strand" evidence="18">
    <location>
        <begin position="2082"/>
        <end position="2089"/>
    </location>
</feature>
<feature type="strand" evidence="18">
    <location>
        <begin position="2091"/>
        <end position="2093"/>
    </location>
</feature>
<feature type="turn" evidence="18">
    <location>
        <begin position="2095"/>
        <end position="2097"/>
    </location>
</feature>
<feature type="strand" evidence="18">
    <location>
        <begin position="2099"/>
        <end position="2102"/>
    </location>
</feature>
<feature type="strand" evidence="18">
    <location>
        <begin position="2111"/>
        <end position="2114"/>
    </location>
</feature>
<feature type="helix" evidence="18">
    <location>
        <begin position="2116"/>
        <end position="2118"/>
    </location>
</feature>
<feature type="helix" evidence="18">
    <location>
        <begin position="2120"/>
        <end position="2123"/>
    </location>
</feature>
<feature type="strand" evidence="18">
    <location>
        <begin position="2147"/>
        <end position="2158"/>
    </location>
</feature>
<feature type="turn" evidence="18">
    <location>
        <begin position="2160"/>
        <end position="2162"/>
    </location>
</feature>
<feature type="strand" evidence="18">
    <location>
        <begin position="2164"/>
        <end position="2170"/>
    </location>
</feature>
<feature type="helix" evidence="18">
    <location>
        <begin position="2175"/>
        <end position="2178"/>
    </location>
</feature>
<feature type="turn" evidence="18">
    <location>
        <begin position="2179"/>
        <end position="2181"/>
    </location>
</feature>
<feature type="strand" evidence="18">
    <location>
        <begin position="2183"/>
        <end position="2187"/>
    </location>
</feature>
<feature type="strand" evidence="18">
    <location>
        <begin position="2190"/>
        <end position="2194"/>
    </location>
</feature>
<feature type="helix" evidence="18">
    <location>
        <begin position="2196"/>
        <end position="2198"/>
    </location>
</feature>
<feature type="helix" evidence="18">
    <location>
        <begin position="2199"/>
        <end position="2203"/>
    </location>
</feature>
<feature type="strand" evidence="18">
    <location>
        <begin position="2207"/>
        <end position="2211"/>
    </location>
</feature>
<feature type="strand" evidence="18">
    <location>
        <begin position="2215"/>
        <end position="2219"/>
    </location>
</feature>
<feature type="strand" evidence="18">
    <location>
        <begin position="2222"/>
        <end position="2226"/>
    </location>
</feature>
<feature type="strand" evidence="18">
    <location>
        <begin position="2228"/>
        <end position="2238"/>
    </location>
</feature>
<feature type="helix" evidence="18">
    <location>
        <begin position="2255"/>
        <end position="2260"/>
    </location>
</feature>
<feature type="helix" evidence="18">
    <location>
        <begin position="2262"/>
        <end position="2265"/>
    </location>
</feature>
<comment type="function">
    <text evidence="6">Ubiquitin hydrolase that can remove conjugated ubiquitin from AXIN1 and AXIN2, thereby acting as a regulator of Wnt signaling pathway. Acts as an activator of the Wnt signaling pathway downstream of the beta-catenin destruction complex by deubiquitinating and stabilizing AXIN1 and AXIN2, leading to promote nuclear accumulation of AXIN1 and AXIN2 and positively regulate beta-catenin (CTNBB1)-mediated transcription. Recognizes and hydrolyzes the peptide bond at the C-terminal Gly of ubiquitin. Involved in the processing of poly-ubiquitin precursors as well as that of ubiquitinated proteins.</text>
</comment>
<comment type="catalytic activity">
    <reaction evidence="5 6">
        <text>Thiol-dependent hydrolysis of ester, thioester, amide, peptide and isopeptide bonds formed by the C-terminal Gly of ubiquitin (a 76-residue protein attached to proteins as an intracellular targeting signal).</text>
        <dbReference type="EC" id="3.4.19.12"/>
    </reaction>
</comment>
<comment type="subunit">
    <text evidence="6">Interacts with AXIN1 and AXIN2.</text>
</comment>
<comment type="alternative products">
    <event type="alternative splicing"/>
    <isoform>
        <id>Q70CQ2-1</id>
        <name>1</name>
        <sequence type="displayed"/>
    </isoform>
    <isoform>
        <id>Q70CQ2-2</id>
        <name>2</name>
        <sequence type="described" ref="VSP_035639 VSP_035640"/>
    </isoform>
    <isoform>
        <id>Q70CQ2-3</id>
        <name>3</name>
        <sequence type="described" ref="VSP_035639 VSP_035640 VSP_020463"/>
    </isoform>
</comment>
<comment type="tissue specificity">
    <text evidence="5">Expressed in brain at low level.</text>
</comment>
<comment type="similarity">
    <text evidence="12">Belongs to the peptidase C19 family.</text>
</comment>
<comment type="sequence caution" evidence="12">
    <conflict type="frameshift">
        <sequence resource="EMBL-CDS" id="AAI07762"/>
    </conflict>
</comment>
<comment type="sequence caution" evidence="12">
    <conflict type="erroneous initiation">
        <sequence resource="EMBL-CDS" id="BAA25496"/>
    </conflict>
</comment>
<comment type="sequence caution" evidence="12">
    <conflict type="erroneous initiation">
        <sequence resource="EMBL-CDS" id="BAG54261"/>
    </conflict>
</comment>
<organism>
    <name type="scientific">Homo sapiens</name>
    <name type="common">Human</name>
    <dbReference type="NCBI Taxonomy" id="9606"/>
    <lineage>
        <taxon>Eukaryota</taxon>
        <taxon>Metazoa</taxon>
        <taxon>Chordata</taxon>
        <taxon>Craniata</taxon>
        <taxon>Vertebrata</taxon>
        <taxon>Euteleostomi</taxon>
        <taxon>Mammalia</taxon>
        <taxon>Eutheria</taxon>
        <taxon>Euarchontoglires</taxon>
        <taxon>Primates</taxon>
        <taxon>Haplorrhini</taxon>
        <taxon>Catarrhini</taxon>
        <taxon>Hominidae</taxon>
        <taxon>Homo</taxon>
    </lineage>
</organism>